<keyword id="KW-0067">ATP-binding</keyword>
<keyword id="KW-0347">Helicase</keyword>
<keyword id="KW-0378">Hydrolase</keyword>
<keyword id="KW-0547">Nucleotide-binding</keyword>
<keyword id="KW-0539">Nucleus</keyword>
<keyword id="KW-1185">Reference proteome</keyword>
<keyword id="KW-0690">Ribosome biogenesis</keyword>
<keyword id="KW-0694">RNA-binding</keyword>
<keyword id="KW-0698">rRNA processing</keyword>
<sequence>MSEHTRKSFSDLGISPWLIDTLKALAIYEPTDIQEGVIAQILEGRNCIGGAKTGSGKTAAFALPIIEKWSKDPSGIFALILTPTRELAIQIDEQFAALGANLNLKHALIVGGMDMIRQSIDLSKRPHVVVATPGRLADLIRSNGEETIAGLRRIKFLVMDEADRLLSPTFADDLDDCFSVLPASEDRQTLLFTATVTDAIRQLKYQPQKNNKPPLWLYEVETDNISVPSTLQQSYIFVSSQVREAYLVHLLTIPENAKKSAIIFVNRTRTAELIYSILRLLELRVTELHSEMVQRERINSLGRFRAEAAKILVATDVASRGLDIPSVQLVINFDLPRDPDDYIHRVGRTARAGRSGESISIVTERDVDLVHAIEDRVGTKLSEYEHVSENKMLEYIKEVTDAKRQASLEMIDRGFGERRQKRNEKRLMANGISNKLKNSGRKKKAKNTLSTEK</sequence>
<organism>
    <name type="scientific">Schizosaccharomyces pombe (strain 972 / ATCC 24843)</name>
    <name type="common">Fission yeast</name>
    <dbReference type="NCBI Taxonomy" id="284812"/>
    <lineage>
        <taxon>Eukaryota</taxon>
        <taxon>Fungi</taxon>
        <taxon>Dikarya</taxon>
        <taxon>Ascomycota</taxon>
        <taxon>Taphrinomycotina</taxon>
        <taxon>Schizosaccharomycetes</taxon>
        <taxon>Schizosaccharomycetales</taxon>
        <taxon>Schizosaccharomycetaceae</taxon>
        <taxon>Schizosaccharomyces</taxon>
    </lineage>
</organism>
<protein>
    <recommendedName>
        <fullName>ATP-dependent RNA helicase dbp8</fullName>
        <ecNumber>3.6.4.13</ecNumber>
    </recommendedName>
</protein>
<reference key="1">
    <citation type="journal article" date="2002" name="Nature">
        <title>The genome sequence of Schizosaccharomyces pombe.</title>
        <authorList>
            <person name="Wood V."/>
            <person name="Gwilliam R."/>
            <person name="Rajandream M.A."/>
            <person name="Lyne M.H."/>
            <person name="Lyne R."/>
            <person name="Stewart A."/>
            <person name="Sgouros J.G."/>
            <person name="Peat N."/>
            <person name="Hayles J."/>
            <person name="Baker S.G."/>
            <person name="Basham D."/>
            <person name="Bowman S."/>
            <person name="Brooks K."/>
            <person name="Brown D."/>
            <person name="Brown S."/>
            <person name="Chillingworth T."/>
            <person name="Churcher C.M."/>
            <person name="Collins M."/>
            <person name="Connor R."/>
            <person name="Cronin A."/>
            <person name="Davis P."/>
            <person name="Feltwell T."/>
            <person name="Fraser A."/>
            <person name="Gentles S."/>
            <person name="Goble A."/>
            <person name="Hamlin N."/>
            <person name="Harris D.E."/>
            <person name="Hidalgo J."/>
            <person name="Hodgson G."/>
            <person name="Holroyd S."/>
            <person name="Hornsby T."/>
            <person name="Howarth S."/>
            <person name="Huckle E.J."/>
            <person name="Hunt S."/>
            <person name="Jagels K."/>
            <person name="James K.D."/>
            <person name="Jones L."/>
            <person name="Jones M."/>
            <person name="Leather S."/>
            <person name="McDonald S."/>
            <person name="McLean J."/>
            <person name="Mooney P."/>
            <person name="Moule S."/>
            <person name="Mungall K.L."/>
            <person name="Murphy L.D."/>
            <person name="Niblett D."/>
            <person name="Odell C."/>
            <person name="Oliver K."/>
            <person name="O'Neil S."/>
            <person name="Pearson D."/>
            <person name="Quail M.A."/>
            <person name="Rabbinowitsch E."/>
            <person name="Rutherford K.M."/>
            <person name="Rutter S."/>
            <person name="Saunders D."/>
            <person name="Seeger K."/>
            <person name="Sharp S."/>
            <person name="Skelton J."/>
            <person name="Simmonds M.N."/>
            <person name="Squares R."/>
            <person name="Squares S."/>
            <person name="Stevens K."/>
            <person name="Taylor K."/>
            <person name="Taylor R.G."/>
            <person name="Tivey A."/>
            <person name="Walsh S.V."/>
            <person name="Warren T."/>
            <person name="Whitehead S."/>
            <person name="Woodward J.R."/>
            <person name="Volckaert G."/>
            <person name="Aert R."/>
            <person name="Robben J."/>
            <person name="Grymonprez B."/>
            <person name="Weltjens I."/>
            <person name="Vanstreels E."/>
            <person name="Rieger M."/>
            <person name="Schaefer M."/>
            <person name="Mueller-Auer S."/>
            <person name="Gabel C."/>
            <person name="Fuchs M."/>
            <person name="Duesterhoeft A."/>
            <person name="Fritzc C."/>
            <person name="Holzer E."/>
            <person name="Moestl D."/>
            <person name="Hilbert H."/>
            <person name="Borzym K."/>
            <person name="Langer I."/>
            <person name="Beck A."/>
            <person name="Lehrach H."/>
            <person name="Reinhardt R."/>
            <person name="Pohl T.M."/>
            <person name="Eger P."/>
            <person name="Zimmermann W."/>
            <person name="Wedler H."/>
            <person name="Wambutt R."/>
            <person name="Purnelle B."/>
            <person name="Goffeau A."/>
            <person name="Cadieu E."/>
            <person name="Dreano S."/>
            <person name="Gloux S."/>
            <person name="Lelaure V."/>
            <person name="Mottier S."/>
            <person name="Galibert F."/>
            <person name="Aves S.J."/>
            <person name="Xiang Z."/>
            <person name="Hunt C."/>
            <person name="Moore K."/>
            <person name="Hurst S.M."/>
            <person name="Lucas M."/>
            <person name="Rochet M."/>
            <person name="Gaillardin C."/>
            <person name="Tallada V.A."/>
            <person name="Garzon A."/>
            <person name="Thode G."/>
            <person name="Daga R.R."/>
            <person name="Cruzado L."/>
            <person name="Jimenez J."/>
            <person name="Sanchez M."/>
            <person name="del Rey F."/>
            <person name="Benito J."/>
            <person name="Dominguez A."/>
            <person name="Revuelta J.L."/>
            <person name="Moreno S."/>
            <person name="Armstrong J."/>
            <person name="Forsburg S.L."/>
            <person name="Cerutti L."/>
            <person name="Lowe T."/>
            <person name="McCombie W.R."/>
            <person name="Paulsen I."/>
            <person name="Potashkin J."/>
            <person name="Shpakovski G.V."/>
            <person name="Ussery D."/>
            <person name="Barrell B.G."/>
            <person name="Nurse P."/>
        </authorList>
    </citation>
    <scope>NUCLEOTIDE SEQUENCE [LARGE SCALE GENOMIC DNA]</scope>
    <source>
        <strain>972 / ATCC 24843</strain>
    </source>
</reference>
<comment type="function">
    <text evidence="1">ATP-binding RNA helicase involved in 40S ribosomal subunit biogenesis and is required for the normal formation of 18S rRNAs through pre-rRNA processing at A0, A1 and A2 sites. Required for vegetative growth (By similarity).</text>
</comment>
<comment type="catalytic activity">
    <reaction>
        <text>ATP + H2O = ADP + phosphate + H(+)</text>
        <dbReference type="Rhea" id="RHEA:13065"/>
        <dbReference type="ChEBI" id="CHEBI:15377"/>
        <dbReference type="ChEBI" id="CHEBI:15378"/>
        <dbReference type="ChEBI" id="CHEBI:30616"/>
        <dbReference type="ChEBI" id="CHEBI:43474"/>
        <dbReference type="ChEBI" id="CHEBI:456216"/>
        <dbReference type="EC" id="3.6.4.13"/>
    </reaction>
</comment>
<comment type="subcellular location">
    <subcellularLocation>
        <location evidence="1">Nucleus</location>
        <location evidence="1">Nucleolus</location>
    </subcellularLocation>
</comment>
<comment type="domain">
    <text>The Q motif is unique to and characteristic of the DEAD box family of RNA helicases and controls ATP binding and hydrolysis.</text>
</comment>
<comment type="similarity">
    <text evidence="5">Belongs to the DEAD box helicase family. DDX49/DBP8 subfamily.</text>
</comment>
<dbReference type="EC" id="3.6.4.13"/>
<dbReference type="EMBL" id="CU329671">
    <property type="protein sequence ID" value="CAC05248.1"/>
    <property type="molecule type" value="Genomic_DNA"/>
</dbReference>
<dbReference type="RefSeq" id="NP_596794.1">
    <property type="nucleotide sequence ID" value="NM_001023814.2"/>
</dbReference>
<dbReference type="SMR" id="Q9HGM5"/>
<dbReference type="BioGRID" id="277584">
    <property type="interactions" value="1"/>
</dbReference>
<dbReference type="FunCoup" id="Q9HGM5">
    <property type="interactions" value="511"/>
</dbReference>
<dbReference type="STRING" id="284812.Q9HGM5"/>
<dbReference type="iPTMnet" id="Q9HGM5"/>
<dbReference type="PaxDb" id="4896-SPBC543.06c.1"/>
<dbReference type="EnsemblFungi" id="SPBC543.06c.1">
    <property type="protein sequence ID" value="SPBC543.06c.1:pep"/>
    <property type="gene ID" value="SPBC543.06c"/>
</dbReference>
<dbReference type="GeneID" id="2541069"/>
<dbReference type="KEGG" id="spo:2541069"/>
<dbReference type="PomBase" id="SPBC543.06c">
    <property type="gene designation" value="dbp8"/>
</dbReference>
<dbReference type="VEuPathDB" id="FungiDB:SPBC543.06c"/>
<dbReference type="eggNOG" id="KOG0340">
    <property type="taxonomic scope" value="Eukaryota"/>
</dbReference>
<dbReference type="HOGENOM" id="CLU_003041_1_1_1"/>
<dbReference type="InParanoid" id="Q9HGM5"/>
<dbReference type="OMA" id="IMIFTDT"/>
<dbReference type="PhylomeDB" id="Q9HGM5"/>
<dbReference type="Reactome" id="R-SPO-6791226">
    <property type="pathway name" value="Major pathway of rRNA processing in the nucleolus and cytosol"/>
</dbReference>
<dbReference type="PRO" id="PR:Q9HGM5"/>
<dbReference type="Proteomes" id="UP000002485">
    <property type="component" value="Chromosome II"/>
</dbReference>
<dbReference type="GO" id="GO:0005730">
    <property type="term" value="C:nucleolus"/>
    <property type="evidence" value="ECO:0007005"/>
    <property type="project" value="PomBase"/>
</dbReference>
<dbReference type="GO" id="GO:0005634">
    <property type="term" value="C:nucleus"/>
    <property type="evidence" value="ECO:0007005"/>
    <property type="project" value="PomBase"/>
</dbReference>
<dbReference type="GO" id="GO:0005524">
    <property type="term" value="F:ATP binding"/>
    <property type="evidence" value="ECO:0000255"/>
    <property type="project" value="PomBase"/>
</dbReference>
<dbReference type="GO" id="GO:0016887">
    <property type="term" value="F:ATP hydrolysis activity"/>
    <property type="evidence" value="ECO:0007669"/>
    <property type="project" value="RHEA"/>
</dbReference>
<dbReference type="GO" id="GO:0003723">
    <property type="term" value="F:RNA binding"/>
    <property type="evidence" value="ECO:0007669"/>
    <property type="project" value="UniProtKB-KW"/>
</dbReference>
<dbReference type="GO" id="GO:0003724">
    <property type="term" value="F:RNA helicase activity"/>
    <property type="evidence" value="ECO:0000266"/>
    <property type="project" value="PomBase"/>
</dbReference>
<dbReference type="GO" id="GO:0006364">
    <property type="term" value="P:rRNA processing"/>
    <property type="evidence" value="ECO:0000318"/>
    <property type="project" value="GO_Central"/>
</dbReference>
<dbReference type="CDD" id="cd17955">
    <property type="entry name" value="DEADc_DDX49"/>
    <property type="match status" value="1"/>
</dbReference>
<dbReference type="CDD" id="cd18787">
    <property type="entry name" value="SF2_C_DEAD"/>
    <property type="match status" value="1"/>
</dbReference>
<dbReference type="FunFam" id="3.40.50.300:FF:000993">
    <property type="entry name" value="probable ATP-dependent RNA helicase DDX49"/>
    <property type="match status" value="1"/>
</dbReference>
<dbReference type="Gene3D" id="3.40.50.300">
    <property type="entry name" value="P-loop containing nucleotide triphosphate hydrolases"/>
    <property type="match status" value="2"/>
</dbReference>
<dbReference type="InterPro" id="IPR011545">
    <property type="entry name" value="DEAD/DEAH_box_helicase_dom"/>
</dbReference>
<dbReference type="InterPro" id="IPR050079">
    <property type="entry name" value="DEAD_box_RNA_helicase"/>
</dbReference>
<dbReference type="InterPro" id="IPR014001">
    <property type="entry name" value="Helicase_ATP-bd"/>
</dbReference>
<dbReference type="InterPro" id="IPR001650">
    <property type="entry name" value="Helicase_C-like"/>
</dbReference>
<dbReference type="InterPro" id="IPR027417">
    <property type="entry name" value="P-loop_NTPase"/>
</dbReference>
<dbReference type="InterPro" id="IPR000629">
    <property type="entry name" value="RNA-helicase_DEAD-box_CS"/>
</dbReference>
<dbReference type="InterPro" id="IPR014014">
    <property type="entry name" value="RNA_helicase_DEAD_Q_motif"/>
</dbReference>
<dbReference type="PANTHER" id="PTHR47959:SF24">
    <property type="entry name" value="ATP-DEPENDENT RNA HELICASE"/>
    <property type="match status" value="1"/>
</dbReference>
<dbReference type="PANTHER" id="PTHR47959">
    <property type="entry name" value="ATP-DEPENDENT RNA HELICASE RHLE-RELATED"/>
    <property type="match status" value="1"/>
</dbReference>
<dbReference type="Pfam" id="PF00270">
    <property type="entry name" value="DEAD"/>
    <property type="match status" value="1"/>
</dbReference>
<dbReference type="Pfam" id="PF00271">
    <property type="entry name" value="Helicase_C"/>
    <property type="match status" value="1"/>
</dbReference>
<dbReference type="SMART" id="SM00487">
    <property type="entry name" value="DEXDc"/>
    <property type="match status" value="1"/>
</dbReference>
<dbReference type="SMART" id="SM00490">
    <property type="entry name" value="HELICc"/>
    <property type="match status" value="1"/>
</dbReference>
<dbReference type="SUPFAM" id="SSF52540">
    <property type="entry name" value="P-loop containing nucleoside triphosphate hydrolases"/>
    <property type="match status" value="1"/>
</dbReference>
<dbReference type="PROSITE" id="PS00039">
    <property type="entry name" value="DEAD_ATP_HELICASE"/>
    <property type="match status" value="1"/>
</dbReference>
<dbReference type="PROSITE" id="PS51192">
    <property type="entry name" value="HELICASE_ATP_BIND_1"/>
    <property type="match status" value="1"/>
</dbReference>
<dbReference type="PROSITE" id="PS51194">
    <property type="entry name" value="HELICASE_CTER"/>
    <property type="match status" value="1"/>
</dbReference>
<dbReference type="PROSITE" id="PS51195">
    <property type="entry name" value="Q_MOTIF"/>
    <property type="match status" value="1"/>
</dbReference>
<name>DBP8_SCHPO</name>
<gene>
    <name type="primary">dbp8</name>
    <name type="ORF">SPBC543.06c</name>
</gene>
<accession>Q9HGM5</accession>
<feature type="chain" id="PRO_0000232291" description="ATP-dependent RNA helicase dbp8">
    <location>
        <begin position="1"/>
        <end position="453"/>
    </location>
</feature>
<feature type="domain" description="Helicase ATP-binding" evidence="2">
    <location>
        <begin position="38"/>
        <end position="214"/>
    </location>
</feature>
<feature type="domain" description="Helicase C-terminal" evidence="3">
    <location>
        <begin position="230"/>
        <end position="393"/>
    </location>
</feature>
<feature type="region of interest" description="Disordered" evidence="4">
    <location>
        <begin position="413"/>
        <end position="453"/>
    </location>
</feature>
<feature type="short sequence motif" description="Q motif">
    <location>
        <begin position="7"/>
        <end position="35"/>
    </location>
</feature>
<feature type="short sequence motif" description="DEAD box">
    <location>
        <begin position="160"/>
        <end position="163"/>
    </location>
</feature>
<feature type="binding site" evidence="2">
    <location>
        <begin position="51"/>
        <end position="58"/>
    </location>
    <ligand>
        <name>ATP</name>
        <dbReference type="ChEBI" id="CHEBI:30616"/>
    </ligand>
</feature>
<evidence type="ECO:0000250" key="1"/>
<evidence type="ECO:0000255" key="2">
    <source>
        <dbReference type="PROSITE-ProRule" id="PRU00541"/>
    </source>
</evidence>
<evidence type="ECO:0000255" key="3">
    <source>
        <dbReference type="PROSITE-ProRule" id="PRU00542"/>
    </source>
</evidence>
<evidence type="ECO:0000256" key="4">
    <source>
        <dbReference type="SAM" id="MobiDB-lite"/>
    </source>
</evidence>
<evidence type="ECO:0000305" key="5"/>
<proteinExistence type="inferred from homology"/>